<organism>
    <name type="scientific">Candida albicans (strain SC5314 / ATCC MYA-2876)</name>
    <name type="common">Yeast</name>
    <dbReference type="NCBI Taxonomy" id="237561"/>
    <lineage>
        <taxon>Eukaryota</taxon>
        <taxon>Fungi</taxon>
        <taxon>Dikarya</taxon>
        <taxon>Ascomycota</taxon>
        <taxon>Saccharomycotina</taxon>
        <taxon>Pichiomycetes</taxon>
        <taxon>Debaryomycetaceae</taxon>
        <taxon>Candida/Lodderomyces clade</taxon>
        <taxon>Candida</taxon>
    </lineage>
</organism>
<reference key="1">
    <citation type="journal article" date="1998" name="Proc. Natl. Acad. Sci. U.S.A.">
        <title>Molecular analysis of CaMnt1p, a mannosyl transferase important for adhesion and virulence of Candida albicans.</title>
        <authorList>
            <person name="Buurman E.T."/>
            <person name="Westwater C."/>
            <person name="Hube B."/>
            <person name="Brown A.J."/>
            <person name="Odds F.C."/>
            <person name="Gow N.A.R."/>
        </authorList>
    </citation>
    <scope>NUCLEOTIDE SEQUENCE [GENOMIC DNA]</scope>
    <source>
        <strain>SC5314 / CAI4 / ATCC MYA-682</strain>
    </source>
</reference>
<reference key="2">
    <citation type="journal article" date="2004" name="Proc. Natl. Acad. Sci. U.S.A.">
        <title>The diploid genome sequence of Candida albicans.</title>
        <authorList>
            <person name="Jones T."/>
            <person name="Federspiel N.A."/>
            <person name="Chibana H."/>
            <person name="Dungan J."/>
            <person name="Kalman S."/>
            <person name="Magee B.B."/>
            <person name="Newport G."/>
            <person name="Thorstenson Y.R."/>
            <person name="Agabian N."/>
            <person name="Magee P.T."/>
            <person name="Davis R.W."/>
            <person name="Scherer S."/>
        </authorList>
    </citation>
    <scope>NUCLEOTIDE SEQUENCE [LARGE SCALE GENOMIC DNA]</scope>
    <source>
        <strain>SC5314 / ATCC MYA-2876</strain>
    </source>
</reference>
<reference key="3">
    <citation type="journal article" date="2007" name="Genome Biol.">
        <title>Assembly of the Candida albicans genome into sixteen supercontigs aligned on the eight chromosomes.</title>
        <authorList>
            <person name="van het Hoog M."/>
            <person name="Rast T.J."/>
            <person name="Martchenko M."/>
            <person name="Grindle S."/>
            <person name="Dignard D."/>
            <person name="Hogues H."/>
            <person name="Cuomo C."/>
            <person name="Berriman M."/>
            <person name="Scherer S."/>
            <person name="Magee B.B."/>
            <person name="Whiteway M."/>
            <person name="Chibana H."/>
            <person name="Nantel A."/>
            <person name="Magee P.T."/>
        </authorList>
    </citation>
    <scope>GENOME REANNOTATION</scope>
    <source>
        <strain>SC5314 / ATCC MYA-2876</strain>
    </source>
</reference>
<reference key="4">
    <citation type="journal article" date="2013" name="Genome Biol.">
        <title>Assembly of a phased diploid Candida albicans genome facilitates allele-specific measurements and provides a simple model for repeat and indel structure.</title>
        <authorList>
            <person name="Muzzey D."/>
            <person name="Schwartz K."/>
            <person name="Weissman J.S."/>
            <person name="Sherlock G."/>
        </authorList>
    </citation>
    <scope>NUCLEOTIDE SEQUENCE [LARGE SCALE GENOMIC DNA]</scope>
    <scope>GENOME REANNOTATION</scope>
    <source>
        <strain>SC5314 / ATCC MYA-2876</strain>
    </source>
</reference>
<reference key="5">
    <citation type="journal article" date="2005" name="J. Biol. Chem.">
        <title>Mnt1p and Mnt2p of Candida albicans are partially redundant alpha-1,2-mannosyltransferases that participate in O-linked mannosylation and are required for adhesion and virulence.</title>
        <authorList>
            <person name="Munro C.A."/>
            <person name="Bates S."/>
            <person name="Buurman E.T."/>
            <person name="Hughes H.B."/>
            <person name="MacCallum D.M."/>
            <person name="Bertram G."/>
            <person name="Atrih A."/>
            <person name="Ferguson M.A.J."/>
            <person name="Bain J.M."/>
            <person name="Brand A."/>
            <person name="Hamilton S."/>
            <person name="Westwater C."/>
            <person name="Thomson L.M."/>
            <person name="Brown A.J.P."/>
            <person name="Odds F.C."/>
            <person name="Gow N.A.R."/>
        </authorList>
    </citation>
    <scope>FUNCTION</scope>
    <source>
        <strain>SC5314 / CAI4 / ATCC MYA-682</strain>
    </source>
</reference>
<comment type="function">
    <text evidence="3">Involved in O-glycosylation of cell wall and secreted proteins. Transfers an alpha-D-mannosyl residue from GDP-mannose into lipid-linked oligosaccharide, forming an alpha-(1-&gt;2)-D-mannosyl-D-mannose linkage. Mainly responsible for the addition of the second mannose residue in an O-linked mannose pentamer. Can also substitute for MNT2 by adding the third mannose residue. Important for adherence to host surfaces and for virulence.</text>
</comment>
<comment type="pathway">
    <text>Protein modification; protein glycosylation.</text>
</comment>
<comment type="subcellular location">
    <subcellularLocation>
        <location evidence="4">Golgi apparatus membrane</location>
        <topology evidence="4">Single-pass type II membrane protein</topology>
    </subcellularLocation>
</comment>
<comment type="similarity">
    <text evidence="4">Belongs to the glycosyltransferase 15 family.</text>
</comment>
<keyword id="KW-0328">Glycosyltransferase</keyword>
<keyword id="KW-0333">Golgi apparatus</keyword>
<keyword id="KW-0472">Membrane</keyword>
<keyword id="KW-1185">Reference proteome</keyword>
<keyword id="KW-0735">Signal-anchor</keyword>
<keyword id="KW-0808">Transferase</keyword>
<keyword id="KW-0812">Transmembrane</keyword>
<keyword id="KW-1133">Transmembrane helix</keyword>
<name>MNT1_CANAL</name>
<sequence length="431" mass="50004">MASTRSNARLIRFGIFALVLIGCGYILTRGSSFQPPNYQQTQSPAAHEKQTGNVAAGGGAGSGSAGAQVPLGKNRGPIPKAIMGAGEGGSDAPVPQQDIPDSYTLNDKIKATFVTLARNSDLYSLAESIRHVEDRFNKKFHYDWVFLNDEEFNDEFKETVGSLVSGNTKFGLIPKEHWSYPPWIDQEKAALVREQMREKKIIYGHSESYRHMCRFESGFFWRQEILNDYDYYWRVEPDIKLYCDIDYDIFKWMKDNNKDYAFTISLPEYKETIPTLWDTTKEFIEKNPQYLAQNNLMDWVSDDKGQTYNGCHFWSNFEIGSLAFWRSEAYRKYFEHLDKAGGFFYERWGDAPVHSIAAALFLPREKIHFFEDVGYYHVPFTNCPVDKEVRKARNCNCDPNKDFTWRGYSCTTKYYTLNNFKRQKGWEKYTA</sequence>
<accession>Q00310</accession>
<accession>A0A1D8PJA3</accession>
<accession>Q5AJC6</accession>
<protein>
    <recommendedName>
        <fullName>Glycolipid 2-alpha-mannosyltransferase 1</fullName>
        <ecNumber>2.4.1.-</ecNumber>
    </recommendedName>
    <alternativeName>
        <fullName>Alpha-1,2-mannosyltransferase 1</fullName>
    </alternativeName>
</protein>
<proteinExistence type="inferred from homology"/>
<feature type="chain" id="PRO_0000208240" description="Glycolipid 2-alpha-mannosyltransferase 1">
    <location>
        <begin position="1"/>
        <end position="431"/>
    </location>
</feature>
<feature type="topological domain" description="Cytoplasmic" evidence="1">
    <location>
        <begin position="1"/>
        <end position="9"/>
    </location>
</feature>
<feature type="transmembrane region" description="Helical; Signal-anchor for type II membrane protein" evidence="1">
    <location>
        <begin position="10"/>
        <end position="28"/>
    </location>
</feature>
<feature type="topological domain" description="Lumenal" evidence="1">
    <location>
        <begin position="29"/>
        <end position="431"/>
    </location>
</feature>
<feature type="region of interest" description="Disordered" evidence="2">
    <location>
        <begin position="35"/>
        <end position="73"/>
    </location>
</feature>
<feature type="compositionally biased region" description="Polar residues" evidence="2">
    <location>
        <begin position="35"/>
        <end position="44"/>
    </location>
</feature>
<feature type="compositionally biased region" description="Gly residues" evidence="2">
    <location>
        <begin position="55"/>
        <end position="64"/>
    </location>
</feature>
<feature type="active site" description="Nucleophile" evidence="1">
    <location>
        <position position="318"/>
    </location>
</feature>
<evidence type="ECO:0000255" key="1"/>
<evidence type="ECO:0000256" key="2">
    <source>
        <dbReference type="SAM" id="MobiDB-lite"/>
    </source>
</evidence>
<evidence type="ECO:0000269" key="3">
    <source>
    </source>
</evidence>
<evidence type="ECO:0000305" key="4"/>
<gene>
    <name type="primary">MNT1</name>
    <name type="synonym">KRE2</name>
    <name type="synonym">KTR1</name>
    <name type="ordered locus">CAALFM_C301810CA</name>
    <name type="ORF">CaO19.1665</name>
    <name type="ORF">CaO19.9234</name>
</gene>
<dbReference type="EC" id="2.4.1.-"/>
<dbReference type="EMBL" id="X99619">
    <property type="protein sequence ID" value="CAA67930.1"/>
    <property type="molecule type" value="Genomic_DNA"/>
</dbReference>
<dbReference type="EMBL" id="CP017625">
    <property type="protein sequence ID" value="AOW28222.1"/>
    <property type="molecule type" value="Genomic_DNA"/>
</dbReference>
<dbReference type="RefSeq" id="XP_721742.1">
    <property type="nucleotide sequence ID" value="XM_716649.1"/>
</dbReference>
<dbReference type="SMR" id="Q00310"/>
<dbReference type="FunCoup" id="Q00310">
    <property type="interactions" value="48"/>
</dbReference>
<dbReference type="STRING" id="237561.Q00310"/>
<dbReference type="CAZy" id="GT15">
    <property type="family name" value="Glycosyltransferase Family 15"/>
</dbReference>
<dbReference type="EnsemblFungi" id="C3_01810C_A-T">
    <property type="protein sequence ID" value="C3_01810C_A-T-p1"/>
    <property type="gene ID" value="C3_01810C_A"/>
</dbReference>
<dbReference type="GeneID" id="3636585"/>
<dbReference type="KEGG" id="cal:CAALFM_C301810CA"/>
<dbReference type="CGD" id="CAL0000188662">
    <property type="gene designation" value="MNT1"/>
</dbReference>
<dbReference type="VEuPathDB" id="FungiDB:C3_01810C_A"/>
<dbReference type="eggNOG" id="KOG4472">
    <property type="taxonomic scope" value="Eukaryota"/>
</dbReference>
<dbReference type="HOGENOM" id="CLU_024327_0_1_1"/>
<dbReference type="InParanoid" id="Q00310"/>
<dbReference type="OMA" id="YCDIHYD"/>
<dbReference type="OrthoDB" id="439943at2759"/>
<dbReference type="UniPathway" id="UPA00378"/>
<dbReference type="PHI-base" id="PHI:104"/>
<dbReference type="PRO" id="PR:Q00310"/>
<dbReference type="Proteomes" id="UP000000559">
    <property type="component" value="Chromosome 3"/>
</dbReference>
<dbReference type="GO" id="GO:0005576">
    <property type="term" value="C:extracellular region"/>
    <property type="evidence" value="ECO:0000314"/>
    <property type="project" value="CGD"/>
</dbReference>
<dbReference type="GO" id="GO:0005794">
    <property type="term" value="C:Golgi apparatus"/>
    <property type="evidence" value="ECO:0000318"/>
    <property type="project" value="GO_Central"/>
</dbReference>
<dbReference type="GO" id="GO:0000139">
    <property type="term" value="C:Golgi membrane"/>
    <property type="evidence" value="ECO:0007669"/>
    <property type="project" value="UniProtKB-SubCell"/>
</dbReference>
<dbReference type="GO" id="GO:0016020">
    <property type="term" value="C:membrane"/>
    <property type="evidence" value="ECO:0000314"/>
    <property type="project" value="CGD"/>
</dbReference>
<dbReference type="GO" id="GO:0005886">
    <property type="term" value="C:plasma membrane"/>
    <property type="evidence" value="ECO:0000314"/>
    <property type="project" value="CGD"/>
</dbReference>
<dbReference type="GO" id="GO:0000026">
    <property type="term" value="F:alpha-1,2-mannosyltransferase activity"/>
    <property type="evidence" value="ECO:0000314"/>
    <property type="project" value="CGD"/>
</dbReference>
<dbReference type="GO" id="GO:0043710">
    <property type="term" value="P:cell adhesion involved in multi-species biofilm formation"/>
    <property type="evidence" value="ECO:0000315"/>
    <property type="project" value="CGD"/>
</dbReference>
<dbReference type="GO" id="GO:0000032">
    <property type="term" value="P:cell wall mannoprotein biosynthetic process"/>
    <property type="evidence" value="ECO:0000318"/>
    <property type="project" value="GO_Central"/>
</dbReference>
<dbReference type="GO" id="GO:0098609">
    <property type="term" value="P:cell-cell adhesion"/>
    <property type="evidence" value="ECO:0000315"/>
    <property type="project" value="CGD"/>
</dbReference>
<dbReference type="GO" id="GO:0007160">
    <property type="term" value="P:cell-matrix adhesion"/>
    <property type="evidence" value="ECO:0000315"/>
    <property type="project" value="CGD"/>
</dbReference>
<dbReference type="GO" id="GO:0006057">
    <property type="term" value="P:mannoprotein biosynthetic process"/>
    <property type="evidence" value="ECO:0000315"/>
    <property type="project" value="CGD"/>
</dbReference>
<dbReference type="GO" id="GO:0006491">
    <property type="term" value="P:N-glycan processing"/>
    <property type="evidence" value="ECO:0007669"/>
    <property type="project" value="EnsemblFungi"/>
</dbReference>
<dbReference type="GO" id="GO:0006487">
    <property type="term" value="P:protein N-linked glycosylation"/>
    <property type="evidence" value="ECO:0000318"/>
    <property type="project" value="GO_Central"/>
</dbReference>
<dbReference type="GO" id="GO:0006493">
    <property type="term" value="P:protein O-linked glycosylation"/>
    <property type="evidence" value="ECO:0000314"/>
    <property type="project" value="CGD"/>
</dbReference>
<dbReference type="GO" id="GO:0030682">
    <property type="term" value="P:symbiont-mediated perturbation of host defenses"/>
    <property type="evidence" value="ECO:0000315"/>
    <property type="project" value="CGD"/>
</dbReference>
<dbReference type="FunFam" id="3.90.550.10:FF:000051">
    <property type="entry name" value="Alpha-1,2-mannosyltransferase (Ktr4)"/>
    <property type="match status" value="1"/>
</dbReference>
<dbReference type="Gene3D" id="3.90.550.10">
    <property type="entry name" value="Spore Coat Polysaccharide Biosynthesis Protein SpsA, Chain A"/>
    <property type="match status" value="1"/>
</dbReference>
<dbReference type="InterPro" id="IPR002685">
    <property type="entry name" value="Glyco_trans_15"/>
</dbReference>
<dbReference type="InterPro" id="IPR029044">
    <property type="entry name" value="Nucleotide-diphossugar_trans"/>
</dbReference>
<dbReference type="PANTHER" id="PTHR31121">
    <property type="entry name" value="ALPHA-1,2 MANNOSYLTRANSFERASE KTR1"/>
    <property type="match status" value="1"/>
</dbReference>
<dbReference type="PANTHER" id="PTHR31121:SF6">
    <property type="entry name" value="ALPHA-1,2 MANNOSYLTRANSFERASE KTR1"/>
    <property type="match status" value="1"/>
</dbReference>
<dbReference type="Pfam" id="PF01793">
    <property type="entry name" value="Glyco_transf_15"/>
    <property type="match status" value="1"/>
</dbReference>
<dbReference type="SUPFAM" id="SSF53448">
    <property type="entry name" value="Nucleotide-diphospho-sugar transferases"/>
    <property type="match status" value="1"/>
</dbReference>